<reference key="1">
    <citation type="journal article" date="1997" name="Antimicrob. Agents Chemother.">
        <title>IMP dehydrogenase from Pneumocystis carinii as a potential drug target.</title>
        <authorList>
            <person name="O'Gara M.J."/>
            <person name="Lee C.H."/>
            <person name="Weinberg G.A."/>
            <person name="Nott J.M."/>
            <person name="Queener S.F."/>
        </authorList>
    </citation>
    <scope>NUCLEOTIDE SEQUENCE [MRNA] (ISOFORM 2)</scope>
    <scope>PROTEIN SEQUENCE OF 119-132; 172-186 AND 300-313</scope>
    <scope>FUNCTION</scope>
    <scope>BIOPHYSICOCHEMICAL PROPERTIES</scope>
    <scope>ACTIVITY REGULATION</scope>
</reference>
<reference key="2">
    <citation type="journal article" date="2001" name="Gene">
        <title>Differential splicing of Pneumocystis carinii f. sp. carinii inosine 5'-monophosphate dehydrogenase pre-mRNA.</title>
        <authorList>
            <person name="Ye D."/>
            <person name="Lee C.H."/>
            <person name="Queener S.F."/>
        </authorList>
    </citation>
    <scope>NUCLEOTIDE SEQUENCE [MRNA] (ISOFORMS 1 AND 2)</scope>
    <scope>FUNCTION</scope>
</reference>
<protein>
    <recommendedName>
        <fullName evidence="1">Inosine-5'-monophosphate dehydrogenase</fullName>
        <shortName evidence="1">IMP dehydrogenase</shortName>
        <shortName evidence="1">IMPD</shortName>
        <shortName evidence="1">IMPDH</shortName>
        <ecNumber evidence="1">1.1.1.205</ecNumber>
    </recommendedName>
</protein>
<gene>
    <name type="primary">GUA1</name>
</gene>
<dbReference type="EC" id="1.1.1.205" evidence="1"/>
<dbReference type="EMBL" id="U42442">
    <property type="protein sequence ID" value="AAA97462.1"/>
    <property type="molecule type" value="mRNA"/>
</dbReference>
<dbReference type="EMBL" id="AF196975">
    <property type="protein sequence ID" value="AAF13230.1"/>
    <property type="molecule type" value="mRNA"/>
</dbReference>
<dbReference type="SMR" id="Q12658"/>
<dbReference type="VEuPathDB" id="FungiDB:T552_02772"/>
<dbReference type="BRENDA" id="1.1.1.205">
    <property type="organism ID" value="4924"/>
</dbReference>
<dbReference type="SABIO-RK" id="Q12658"/>
<dbReference type="UniPathway" id="UPA00601">
    <property type="reaction ID" value="UER00295"/>
</dbReference>
<dbReference type="GO" id="GO:0005737">
    <property type="term" value="C:cytoplasm"/>
    <property type="evidence" value="ECO:0007669"/>
    <property type="project" value="UniProtKB-SubCell"/>
</dbReference>
<dbReference type="GO" id="GO:0003938">
    <property type="term" value="F:IMP dehydrogenase activity"/>
    <property type="evidence" value="ECO:0007669"/>
    <property type="project" value="UniProtKB-UniRule"/>
</dbReference>
<dbReference type="GO" id="GO:0046872">
    <property type="term" value="F:metal ion binding"/>
    <property type="evidence" value="ECO:0007669"/>
    <property type="project" value="UniProtKB-UniRule"/>
</dbReference>
<dbReference type="GO" id="GO:0000166">
    <property type="term" value="F:nucleotide binding"/>
    <property type="evidence" value="ECO:0007669"/>
    <property type="project" value="UniProtKB-UniRule"/>
</dbReference>
<dbReference type="GO" id="GO:0006177">
    <property type="term" value="P:GMP biosynthetic process"/>
    <property type="evidence" value="ECO:0007669"/>
    <property type="project" value="UniProtKB-UniRule"/>
</dbReference>
<dbReference type="GO" id="GO:0006183">
    <property type="term" value="P:GTP biosynthetic process"/>
    <property type="evidence" value="ECO:0007669"/>
    <property type="project" value="TreeGrafter"/>
</dbReference>
<dbReference type="CDD" id="cd04601">
    <property type="entry name" value="CBS_pair_IMPDH"/>
    <property type="match status" value="1"/>
</dbReference>
<dbReference type="CDD" id="cd00381">
    <property type="entry name" value="IMPDH"/>
    <property type="match status" value="1"/>
</dbReference>
<dbReference type="FunFam" id="3.20.20.70:FF:000007">
    <property type="entry name" value="Chromosome 19 SCAF14664, whole genome shotgun sequence"/>
    <property type="match status" value="1"/>
</dbReference>
<dbReference type="Gene3D" id="3.20.20.70">
    <property type="entry name" value="Aldolase class I"/>
    <property type="match status" value="1"/>
</dbReference>
<dbReference type="HAMAP" id="MF_01964">
    <property type="entry name" value="IMPDH"/>
    <property type="match status" value="1"/>
</dbReference>
<dbReference type="InterPro" id="IPR013785">
    <property type="entry name" value="Aldolase_TIM"/>
</dbReference>
<dbReference type="InterPro" id="IPR000644">
    <property type="entry name" value="CBS_dom"/>
</dbReference>
<dbReference type="InterPro" id="IPR046342">
    <property type="entry name" value="CBS_dom_sf"/>
</dbReference>
<dbReference type="InterPro" id="IPR005990">
    <property type="entry name" value="IMP_DH"/>
</dbReference>
<dbReference type="InterPro" id="IPR015875">
    <property type="entry name" value="IMP_DH/GMP_Rdtase_CS"/>
</dbReference>
<dbReference type="InterPro" id="IPR001093">
    <property type="entry name" value="IMP_DH_GMPRt"/>
</dbReference>
<dbReference type="NCBIfam" id="TIGR01302">
    <property type="entry name" value="IMP_dehydrog"/>
    <property type="match status" value="1"/>
</dbReference>
<dbReference type="PANTHER" id="PTHR11911:SF111">
    <property type="entry name" value="INOSINE-5'-MONOPHOSPHATE DEHYDROGENASE"/>
    <property type="match status" value="1"/>
</dbReference>
<dbReference type="PANTHER" id="PTHR11911">
    <property type="entry name" value="INOSINE-5-MONOPHOSPHATE DEHYDROGENASE RELATED"/>
    <property type="match status" value="1"/>
</dbReference>
<dbReference type="Pfam" id="PF00571">
    <property type="entry name" value="CBS"/>
    <property type="match status" value="2"/>
</dbReference>
<dbReference type="Pfam" id="PF00478">
    <property type="entry name" value="IMPDH"/>
    <property type="match status" value="1"/>
</dbReference>
<dbReference type="PIRSF" id="PIRSF000130">
    <property type="entry name" value="IMPDH"/>
    <property type="match status" value="1"/>
</dbReference>
<dbReference type="SMART" id="SM00116">
    <property type="entry name" value="CBS"/>
    <property type="match status" value="2"/>
</dbReference>
<dbReference type="SMART" id="SM01240">
    <property type="entry name" value="IMPDH"/>
    <property type="match status" value="1"/>
</dbReference>
<dbReference type="SUPFAM" id="SSF54631">
    <property type="entry name" value="CBS-domain pair"/>
    <property type="match status" value="1"/>
</dbReference>
<dbReference type="SUPFAM" id="SSF51412">
    <property type="entry name" value="Inosine monophosphate dehydrogenase (IMPDH)"/>
    <property type="match status" value="1"/>
</dbReference>
<dbReference type="PROSITE" id="PS51371">
    <property type="entry name" value="CBS"/>
    <property type="match status" value="2"/>
</dbReference>
<dbReference type="PROSITE" id="PS00487">
    <property type="entry name" value="IMP_DH_GMP_RED"/>
    <property type="match status" value="1"/>
</dbReference>
<sequence length="529" mass="58066">MGEDSYLCLSEEIKKKLEEYSEKDGYDLDSLICSRRHGGLTYNDIIILPGYIDFEVNSVSLESHITKKIVLKTPFMSSPMDTVTESDMAINLALLGGIGVIHHNCTIEEQTEMVRKVKKFENGFITSPIVLSLNHRVRDVRRIKEELGFSGIPITDTGQLNGKLLGIVTSRDIQFHNNDESFLSEVMTKDLVTGSEGIRLEEANEILRSCKKGKLPIVDKEGNLTALLSRSDLMKNLHFPLASKLPDSKQLICAAAVGTRPDDRIRLKHLVEAGLDIVVLDSSQGNSIYQINMIKWIKKEFPNLEVIAGNVVTREQAANLISAGADALRVGMGSGSICITQEIMAVGRPQATAVYAVSEFASKFGVPTIADGGIENIGHITKALALGASAVMMGNLLAGTTESPGQYYYRDGQRLKSYRGMGSIDAMEHLSGKNKGDNAASSRYFGEADTIRVAQGVSGSVIDKGSLHVYVPYLRTGLQHSLQDIGVQNLTELRKQVKEKNIRFEFRTVASQLEGNVHGLDSYQKKLWS</sequence>
<evidence type="ECO:0000255" key="1">
    <source>
        <dbReference type="HAMAP-Rule" id="MF_03156"/>
    </source>
</evidence>
<evidence type="ECO:0000269" key="2">
    <source>
    </source>
</evidence>
<evidence type="ECO:0000269" key="3">
    <source>
    </source>
</evidence>
<evidence type="ECO:0000303" key="4">
    <source>
    </source>
</evidence>
<evidence type="ECO:0000303" key="5">
    <source>
    </source>
</evidence>
<evidence type="ECO:0000305" key="6"/>
<name>IMDH_PNECA</name>
<comment type="function">
    <text evidence="1 2 3">Catalyzes the conversion of inosine 5'-phosphate (IMP) to xanthosine 5'-phosphate (XMP), the first committed and rate-limiting step in the de novo synthesis of guanine nucleotides, and therefore plays an important role in the regulation of cell growth.</text>
</comment>
<comment type="catalytic activity">
    <reaction evidence="1">
        <text>IMP + NAD(+) + H2O = XMP + NADH + H(+)</text>
        <dbReference type="Rhea" id="RHEA:11708"/>
        <dbReference type="ChEBI" id="CHEBI:15377"/>
        <dbReference type="ChEBI" id="CHEBI:15378"/>
        <dbReference type="ChEBI" id="CHEBI:57464"/>
        <dbReference type="ChEBI" id="CHEBI:57540"/>
        <dbReference type="ChEBI" id="CHEBI:57945"/>
        <dbReference type="ChEBI" id="CHEBI:58053"/>
        <dbReference type="EC" id="1.1.1.205"/>
    </reaction>
</comment>
<comment type="cofactor">
    <cofactor evidence="1">
        <name>K(+)</name>
        <dbReference type="ChEBI" id="CHEBI:29103"/>
    </cofactor>
</comment>
<comment type="activity regulation">
    <text evidence="1 3">Mycophenolic acid (MPA) is a non-competitive inhibitor that prevents formation of the closed enzyme conformation by binding to the same site as the amobile flap. In contrast, mizoribine monophosphate (MZP) is a competitive inhibitor that induces the closed conformation. MPA is a potent inhibitor of mammalian IMPDHs but a poor inhibitor of the bacterial enzymes. MZP is a more potent inhibitor of bacterial IMPDH. MPA is a potent inhibitor in culture.</text>
</comment>
<comment type="biophysicochemical properties">
    <kinetics>
        <KM evidence="3">21.7 uM for Inosine 5'-phosphate</KM>
        <KM evidence="3">314 uM for NAD(+)</KM>
    </kinetics>
</comment>
<comment type="pathway">
    <text evidence="1">Purine metabolism; XMP biosynthesis via de novo pathway; XMP from IMP: step 1/1.</text>
</comment>
<comment type="subunit">
    <text evidence="1">Homotetramer.</text>
</comment>
<comment type="subcellular location">
    <subcellularLocation>
        <location evidence="1">Cytoplasm</location>
    </subcellularLocation>
</comment>
<comment type="alternative products">
    <event type="alternative splicing"/>
    <isoform>
        <id>Q12658-1</id>
        <name>1</name>
        <sequence type="displayed"/>
    </isoform>
    <isoform>
        <id>Q12658-2</id>
        <name>2</name>
        <sequence type="described" ref="VSP_042318"/>
    </isoform>
</comment>
<comment type="PTM">
    <text>The N-terminus is blocked.</text>
</comment>
<comment type="similarity">
    <text evidence="1">Belongs to the IMPDH/GMPR family.</text>
</comment>
<organism>
    <name type="scientific">Pneumocystis carinii</name>
    <dbReference type="NCBI Taxonomy" id="4754"/>
    <lineage>
        <taxon>Eukaryota</taxon>
        <taxon>Fungi</taxon>
        <taxon>Dikarya</taxon>
        <taxon>Ascomycota</taxon>
        <taxon>Taphrinomycotina</taxon>
        <taxon>Pneumocystomycetes</taxon>
        <taxon>Pneumocystaceae</taxon>
        <taxon>Pneumocystis</taxon>
    </lineage>
</organism>
<proteinExistence type="evidence at protein level"/>
<accession>Q12658</accession>
<accession>Q9UVL0</accession>
<feature type="chain" id="PRO_0000093679" description="Inosine-5'-monophosphate dehydrogenase">
    <location>
        <begin position="1"/>
        <end position="529"/>
    </location>
</feature>
<feature type="domain" description="CBS 1" evidence="1">
    <location>
        <begin position="124"/>
        <end position="185"/>
    </location>
</feature>
<feature type="domain" description="CBS 2" evidence="1">
    <location>
        <begin position="187"/>
        <end position="243"/>
    </location>
</feature>
<feature type="active site" description="Thioimidate intermediate" evidence="1">
    <location>
        <position position="338"/>
    </location>
</feature>
<feature type="active site" description="Proton acceptor" evidence="1">
    <location>
        <position position="443"/>
    </location>
</feature>
<feature type="binding site" evidence="1">
    <location>
        <begin position="281"/>
        <end position="283"/>
    </location>
    <ligand>
        <name>NAD(+)</name>
        <dbReference type="ChEBI" id="CHEBI:57540"/>
    </ligand>
</feature>
<feature type="binding site" evidence="1">
    <location>
        <begin position="331"/>
        <end position="333"/>
    </location>
    <ligand>
        <name>NAD(+)</name>
        <dbReference type="ChEBI" id="CHEBI:57540"/>
    </ligand>
</feature>
<feature type="binding site" description="in other chain" evidence="1">
    <location>
        <position position="333"/>
    </location>
    <ligand>
        <name>K(+)</name>
        <dbReference type="ChEBI" id="CHEBI:29103"/>
        <note>ligand shared between two tetrameric partners</note>
    </ligand>
</feature>
<feature type="binding site" description="in other chain" evidence="1">
    <location>
        <position position="335"/>
    </location>
    <ligand>
        <name>K(+)</name>
        <dbReference type="ChEBI" id="CHEBI:29103"/>
        <note>ligand shared between two tetrameric partners</note>
    </ligand>
</feature>
<feature type="binding site" evidence="1">
    <location>
        <position position="336"/>
    </location>
    <ligand>
        <name>IMP</name>
        <dbReference type="ChEBI" id="CHEBI:58053"/>
    </ligand>
</feature>
<feature type="binding site" description="in other chain" evidence="1">
    <location>
        <position position="338"/>
    </location>
    <ligand>
        <name>K(+)</name>
        <dbReference type="ChEBI" id="CHEBI:29103"/>
        <note>ligand shared between two tetrameric partners</note>
    </ligand>
</feature>
<feature type="binding site" evidence="1">
    <location>
        <begin position="371"/>
        <end position="373"/>
    </location>
    <ligand>
        <name>IMP</name>
        <dbReference type="ChEBI" id="CHEBI:58053"/>
    </ligand>
</feature>
<feature type="binding site" evidence="1">
    <location>
        <begin position="394"/>
        <end position="395"/>
    </location>
    <ligand>
        <name>IMP</name>
        <dbReference type="ChEBI" id="CHEBI:58053"/>
    </ligand>
</feature>
<feature type="binding site" evidence="1">
    <location>
        <begin position="418"/>
        <end position="422"/>
    </location>
    <ligand>
        <name>IMP</name>
        <dbReference type="ChEBI" id="CHEBI:58053"/>
    </ligand>
</feature>
<feature type="binding site" evidence="1">
    <location>
        <position position="455"/>
    </location>
    <ligand>
        <name>IMP</name>
        <dbReference type="ChEBI" id="CHEBI:58053"/>
    </ligand>
</feature>
<feature type="binding site" evidence="1">
    <location>
        <position position="514"/>
    </location>
    <ligand>
        <name>K(+)</name>
        <dbReference type="ChEBI" id="CHEBI:29103"/>
        <note>ligand shared between two tetrameric partners</note>
    </ligand>
</feature>
<feature type="binding site" evidence="1">
    <location>
        <position position="515"/>
    </location>
    <ligand>
        <name>K(+)</name>
        <dbReference type="ChEBI" id="CHEBI:29103"/>
        <note>ligand shared between two tetrameric partners</note>
    </ligand>
</feature>
<feature type="splice variant" id="VSP_042318" description="In isoform 2." evidence="4 5">
    <location>
        <begin position="1"/>
        <end position="75"/>
    </location>
</feature>
<feature type="sequence conflict" description="In Ref. 1; AAA97462." evidence="6" ref="1">
    <original>M</original>
    <variation>I</variation>
    <location>
        <position position="187"/>
    </location>
</feature>
<feature type="sequence conflict" description="In Ref. 1; AAA97462." evidence="6" ref="1">
    <original>A</original>
    <variation>Q</variation>
    <location>
        <position position="255"/>
    </location>
</feature>
<feature type="sequence conflict" description="In Ref. 1; AAA97462." evidence="6" ref="1">
    <original>I</original>
    <variation>N</variation>
    <location>
        <position position="297"/>
    </location>
</feature>
<keyword id="KW-0025">Alternative splicing</keyword>
<keyword id="KW-0129">CBS domain</keyword>
<keyword id="KW-0963">Cytoplasm</keyword>
<keyword id="KW-0903">Direct protein sequencing</keyword>
<keyword id="KW-0332">GMP biosynthesis</keyword>
<keyword id="KW-0479">Metal-binding</keyword>
<keyword id="KW-0520">NAD</keyword>
<keyword id="KW-0560">Oxidoreductase</keyword>
<keyword id="KW-0630">Potassium</keyword>
<keyword id="KW-0658">Purine biosynthesis</keyword>
<keyword id="KW-0677">Repeat</keyword>